<reference key="1">
    <citation type="submission" date="2007-06" db="EMBL/GenBank/DDBJ databases">
        <title>Complete sequence of chromosome of Staphylococcus aureus subsp. aureus JH1.</title>
        <authorList>
            <consortium name="US DOE Joint Genome Institute"/>
            <person name="Copeland A."/>
            <person name="Lucas S."/>
            <person name="Lapidus A."/>
            <person name="Barry K."/>
            <person name="Detter J.C."/>
            <person name="Glavina del Rio T."/>
            <person name="Hammon N."/>
            <person name="Israni S."/>
            <person name="Dalin E."/>
            <person name="Tice H."/>
            <person name="Pitluck S."/>
            <person name="Chain P."/>
            <person name="Malfatti S."/>
            <person name="Shin M."/>
            <person name="Vergez L."/>
            <person name="Schmutz J."/>
            <person name="Larimer F."/>
            <person name="Land M."/>
            <person name="Hauser L."/>
            <person name="Kyrpides N."/>
            <person name="Ivanova N."/>
            <person name="Tomasz A."/>
            <person name="Richardson P."/>
        </authorList>
    </citation>
    <scope>NUCLEOTIDE SEQUENCE [LARGE SCALE GENOMIC DNA]</scope>
    <source>
        <strain>JH1</strain>
    </source>
</reference>
<name>RS12_STAA2</name>
<organism>
    <name type="scientific">Staphylococcus aureus (strain JH1)</name>
    <dbReference type="NCBI Taxonomy" id="359787"/>
    <lineage>
        <taxon>Bacteria</taxon>
        <taxon>Bacillati</taxon>
        <taxon>Bacillota</taxon>
        <taxon>Bacilli</taxon>
        <taxon>Bacillales</taxon>
        <taxon>Staphylococcaceae</taxon>
        <taxon>Staphylococcus</taxon>
    </lineage>
</organism>
<dbReference type="EMBL" id="CP000736">
    <property type="protein sequence ID" value="ABR51440.1"/>
    <property type="molecule type" value="Genomic_DNA"/>
</dbReference>
<dbReference type="SMR" id="A6TZ22"/>
<dbReference type="KEGG" id="sah:SaurJH1_0582"/>
<dbReference type="HOGENOM" id="CLU_104295_1_2_9"/>
<dbReference type="GO" id="GO:0015935">
    <property type="term" value="C:small ribosomal subunit"/>
    <property type="evidence" value="ECO:0007669"/>
    <property type="project" value="InterPro"/>
</dbReference>
<dbReference type="GO" id="GO:0019843">
    <property type="term" value="F:rRNA binding"/>
    <property type="evidence" value="ECO:0007669"/>
    <property type="project" value="UniProtKB-UniRule"/>
</dbReference>
<dbReference type="GO" id="GO:0003735">
    <property type="term" value="F:structural constituent of ribosome"/>
    <property type="evidence" value="ECO:0007669"/>
    <property type="project" value="InterPro"/>
</dbReference>
<dbReference type="GO" id="GO:0000049">
    <property type="term" value="F:tRNA binding"/>
    <property type="evidence" value="ECO:0007669"/>
    <property type="project" value="UniProtKB-UniRule"/>
</dbReference>
<dbReference type="GO" id="GO:0006412">
    <property type="term" value="P:translation"/>
    <property type="evidence" value="ECO:0007669"/>
    <property type="project" value="UniProtKB-UniRule"/>
</dbReference>
<dbReference type="CDD" id="cd03368">
    <property type="entry name" value="Ribosomal_S12"/>
    <property type="match status" value="1"/>
</dbReference>
<dbReference type="FunFam" id="2.40.50.140:FF:000001">
    <property type="entry name" value="30S ribosomal protein S12"/>
    <property type="match status" value="1"/>
</dbReference>
<dbReference type="Gene3D" id="2.40.50.140">
    <property type="entry name" value="Nucleic acid-binding proteins"/>
    <property type="match status" value="1"/>
</dbReference>
<dbReference type="HAMAP" id="MF_00403_B">
    <property type="entry name" value="Ribosomal_uS12_B"/>
    <property type="match status" value="1"/>
</dbReference>
<dbReference type="InterPro" id="IPR012340">
    <property type="entry name" value="NA-bd_OB-fold"/>
</dbReference>
<dbReference type="InterPro" id="IPR006032">
    <property type="entry name" value="Ribosomal_uS12"/>
</dbReference>
<dbReference type="InterPro" id="IPR005679">
    <property type="entry name" value="Ribosomal_uS12_bac"/>
</dbReference>
<dbReference type="NCBIfam" id="TIGR00981">
    <property type="entry name" value="rpsL_bact"/>
    <property type="match status" value="1"/>
</dbReference>
<dbReference type="PANTHER" id="PTHR11652">
    <property type="entry name" value="30S RIBOSOMAL PROTEIN S12 FAMILY MEMBER"/>
    <property type="match status" value="1"/>
</dbReference>
<dbReference type="Pfam" id="PF00164">
    <property type="entry name" value="Ribosom_S12_S23"/>
    <property type="match status" value="1"/>
</dbReference>
<dbReference type="PIRSF" id="PIRSF002133">
    <property type="entry name" value="Ribosomal_S12/S23"/>
    <property type="match status" value="1"/>
</dbReference>
<dbReference type="PRINTS" id="PR01034">
    <property type="entry name" value="RIBOSOMALS12"/>
</dbReference>
<dbReference type="SUPFAM" id="SSF50249">
    <property type="entry name" value="Nucleic acid-binding proteins"/>
    <property type="match status" value="1"/>
</dbReference>
<dbReference type="PROSITE" id="PS00055">
    <property type="entry name" value="RIBOSOMAL_S12"/>
    <property type="match status" value="1"/>
</dbReference>
<proteinExistence type="inferred from homology"/>
<sequence length="137" mass="15287">MPTINQLVRKPRQSKIKKSDSPALNKGFNSKKKKFTDLNSPQKRGVCTRVGTMTPKKPNSALRKYARVRLSNNIEINAYIPGIGHNLQEHSVVLVRGGRVKDLPGVRYHIVRGALDTSGVDGRRQGRSLYGTKKPKN</sequence>
<keyword id="KW-0488">Methylation</keyword>
<keyword id="KW-0687">Ribonucleoprotein</keyword>
<keyword id="KW-0689">Ribosomal protein</keyword>
<keyword id="KW-0694">RNA-binding</keyword>
<keyword id="KW-0699">rRNA-binding</keyword>
<keyword id="KW-0820">tRNA-binding</keyword>
<feature type="chain" id="PRO_1000080419" description="Small ribosomal subunit protein uS12">
    <location>
        <begin position="1"/>
        <end position="137"/>
    </location>
</feature>
<feature type="region of interest" description="Disordered" evidence="3">
    <location>
        <begin position="1"/>
        <end position="55"/>
    </location>
</feature>
<feature type="region of interest" description="Disordered" evidence="3">
    <location>
        <begin position="118"/>
        <end position="137"/>
    </location>
</feature>
<feature type="modified residue" description="3-methylthioaspartic acid" evidence="1">
    <location>
        <position position="102"/>
    </location>
</feature>
<accession>A6TZ22</accession>
<gene>
    <name evidence="2" type="primary">rpsL</name>
    <name type="ordered locus">SaurJH1_0582</name>
</gene>
<protein>
    <recommendedName>
        <fullName evidence="2">Small ribosomal subunit protein uS12</fullName>
    </recommendedName>
    <alternativeName>
        <fullName evidence="4">30S ribosomal protein S12</fullName>
    </alternativeName>
</protein>
<comment type="function">
    <text evidence="2">With S4 and S5 plays an important role in translational accuracy.</text>
</comment>
<comment type="function">
    <text evidence="2">Interacts with and stabilizes bases of the 16S rRNA that are involved in tRNA selection in the A site and with the mRNA backbone. Located at the interface of the 30S and 50S subunits, it traverses the body of the 30S subunit contacting proteins on the other side and probably holding the rRNA structure together. The combined cluster of proteins S8, S12 and S17 appears to hold together the shoulder and platform of the 30S subunit.</text>
</comment>
<comment type="subunit">
    <text evidence="2">Part of the 30S ribosomal subunit. Contacts proteins S8 and S17. May interact with IF1 in the 30S initiation complex.</text>
</comment>
<comment type="similarity">
    <text evidence="2">Belongs to the universal ribosomal protein uS12 family.</text>
</comment>
<evidence type="ECO:0000250" key="1"/>
<evidence type="ECO:0000255" key="2">
    <source>
        <dbReference type="HAMAP-Rule" id="MF_00403"/>
    </source>
</evidence>
<evidence type="ECO:0000256" key="3">
    <source>
        <dbReference type="SAM" id="MobiDB-lite"/>
    </source>
</evidence>
<evidence type="ECO:0000305" key="4"/>